<sequence length="445" mass="51363">MEKIKVALVSLGCDKNRIDSELMLYKLNEEAELVKNPKEAQVIIVNTCGFIETAKEESINTILQMASYKKTHNCKVLVVTGCLTQRYKGELKELIPEMDIMLGVNDYDKLLESIKVFLKSGEKSFYHKYSDTKINEGNRILTTPTYTAYVRIAEGCNNFCTYCAIPRIRGKYRSRKKENILKEVENLAKQGVKEIILIAQDTTMYGIDIYGKKVLHELLRDISKVEGVKWIRLLYCYPEEITKELIEEIKNNDKVCKYLDLPIQQISNSVLKRMGRKTTKETIIDIIKKLRKEIEGITLRTSLIVGFPGETEGEFSELKEFVSDVKLDKLGVFKYSKEEGTSAALMEEQIDEEIKEKREEEIMILQQSISKDINKEKIGKIYEVIVEGTKEDMYYGRNYEMSPEIDGEIYFEKDENVKIGDIIKVKVTHSLEYDLIGVVYNELSK</sequence>
<keyword id="KW-0004">4Fe-4S</keyword>
<keyword id="KW-0963">Cytoplasm</keyword>
<keyword id="KW-0408">Iron</keyword>
<keyword id="KW-0411">Iron-sulfur</keyword>
<keyword id="KW-0479">Metal-binding</keyword>
<keyword id="KW-0949">S-adenosyl-L-methionine</keyword>
<keyword id="KW-0808">Transferase</keyword>
<protein>
    <recommendedName>
        <fullName evidence="1">Ribosomal protein uS12 methylthiotransferase RimO</fullName>
        <shortName evidence="1">uS12 MTTase</shortName>
        <shortName evidence="1">uS12 methylthiotransferase</shortName>
        <ecNumber evidence="1">2.8.4.4</ecNumber>
    </recommendedName>
    <alternativeName>
        <fullName evidence="1">Ribosomal protein uS12 (aspartate-C(3))-methylthiotransferase</fullName>
    </alternativeName>
    <alternativeName>
        <fullName evidence="1">Ribosome maturation factor RimO</fullName>
    </alternativeName>
</protein>
<name>RIMO_CLOBL</name>
<evidence type="ECO:0000255" key="1">
    <source>
        <dbReference type="HAMAP-Rule" id="MF_01865"/>
    </source>
</evidence>
<evidence type="ECO:0000255" key="2">
    <source>
        <dbReference type="PROSITE-ProRule" id="PRU01266"/>
    </source>
</evidence>
<dbReference type="EC" id="2.8.4.4" evidence="1"/>
<dbReference type="EMBL" id="CP000728">
    <property type="protein sequence ID" value="ABS42015.1"/>
    <property type="molecule type" value="Genomic_DNA"/>
</dbReference>
<dbReference type="RefSeq" id="WP_012100364.1">
    <property type="nucleotide sequence ID" value="NC_009699.1"/>
</dbReference>
<dbReference type="SMR" id="A7GFZ4"/>
<dbReference type="KEGG" id="cbf:CLI_2462"/>
<dbReference type="HOGENOM" id="CLU_018697_0_1_9"/>
<dbReference type="Proteomes" id="UP000002410">
    <property type="component" value="Chromosome"/>
</dbReference>
<dbReference type="GO" id="GO:0005829">
    <property type="term" value="C:cytosol"/>
    <property type="evidence" value="ECO:0007669"/>
    <property type="project" value="TreeGrafter"/>
</dbReference>
<dbReference type="GO" id="GO:0051539">
    <property type="term" value="F:4 iron, 4 sulfur cluster binding"/>
    <property type="evidence" value="ECO:0007669"/>
    <property type="project" value="UniProtKB-UniRule"/>
</dbReference>
<dbReference type="GO" id="GO:0035599">
    <property type="term" value="F:aspartic acid methylthiotransferase activity"/>
    <property type="evidence" value="ECO:0007669"/>
    <property type="project" value="TreeGrafter"/>
</dbReference>
<dbReference type="GO" id="GO:0046872">
    <property type="term" value="F:metal ion binding"/>
    <property type="evidence" value="ECO:0007669"/>
    <property type="project" value="UniProtKB-KW"/>
</dbReference>
<dbReference type="GO" id="GO:0103039">
    <property type="term" value="F:protein methylthiotransferase activity"/>
    <property type="evidence" value="ECO:0007669"/>
    <property type="project" value="UniProtKB-EC"/>
</dbReference>
<dbReference type="GO" id="GO:0006400">
    <property type="term" value="P:tRNA modification"/>
    <property type="evidence" value="ECO:0007669"/>
    <property type="project" value="InterPro"/>
</dbReference>
<dbReference type="CDD" id="cd01335">
    <property type="entry name" value="Radical_SAM"/>
    <property type="match status" value="1"/>
</dbReference>
<dbReference type="FunFam" id="2.40.50.140:FF:000210">
    <property type="entry name" value="Ribosomal protein S12 methylthiotransferase RimO"/>
    <property type="match status" value="1"/>
</dbReference>
<dbReference type="FunFam" id="3.40.50.12160:FF:000002">
    <property type="entry name" value="Ribosomal protein S12 methylthiotransferase RimO"/>
    <property type="match status" value="1"/>
</dbReference>
<dbReference type="FunFam" id="3.80.30.20:FF:000001">
    <property type="entry name" value="tRNA-2-methylthio-N(6)-dimethylallyladenosine synthase 2"/>
    <property type="match status" value="1"/>
</dbReference>
<dbReference type="Gene3D" id="3.40.50.12160">
    <property type="entry name" value="Methylthiotransferase, N-terminal domain"/>
    <property type="match status" value="1"/>
</dbReference>
<dbReference type="Gene3D" id="2.40.50.140">
    <property type="entry name" value="Nucleic acid-binding proteins"/>
    <property type="match status" value="1"/>
</dbReference>
<dbReference type="Gene3D" id="3.80.30.20">
    <property type="entry name" value="tm_1862 like domain"/>
    <property type="match status" value="1"/>
</dbReference>
<dbReference type="HAMAP" id="MF_01865">
    <property type="entry name" value="MTTase_RimO"/>
    <property type="match status" value="1"/>
</dbReference>
<dbReference type="InterPro" id="IPR006638">
    <property type="entry name" value="Elp3/MiaA/NifB-like_rSAM"/>
</dbReference>
<dbReference type="InterPro" id="IPR005839">
    <property type="entry name" value="Methylthiotransferase"/>
</dbReference>
<dbReference type="InterPro" id="IPR020612">
    <property type="entry name" value="Methylthiotransferase_CS"/>
</dbReference>
<dbReference type="InterPro" id="IPR013848">
    <property type="entry name" value="Methylthiotransferase_N"/>
</dbReference>
<dbReference type="InterPro" id="IPR038135">
    <property type="entry name" value="Methylthiotransferase_N_sf"/>
</dbReference>
<dbReference type="InterPro" id="IPR012340">
    <property type="entry name" value="NA-bd_OB-fold"/>
</dbReference>
<dbReference type="InterPro" id="IPR005840">
    <property type="entry name" value="Ribosomal_uS12_MeSTrfase_RimO"/>
</dbReference>
<dbReference type="InterPro" id="IPR007197">
    <property type="entry name" value="rSAM"/>
</dbReference>
<dbReference type="InterPro" id="IPR023404">
    <property type="entry name" value="rSAM_horseshoe"/>
</dbReference>
<dbReference type="InterPro" id="IPR002792">
    <property type="entry name" value="TRAM_dom"/>
</dbReference>
<dbReference type="NCBIfam" id="TIGR01125">
    <property type="entry name" value="30S ribosomal protein S12 methylthiotransferase RimO"/>
    <property type="match status" value="1"/>
</dbReference>
<dbReference type="NCBIfam" id="TIGR00089">
    <property type="entry name" value="MiaB/RimO family radical SAM methylthiotransferase"/>
    <property type="match status" value="1"/>
</dbReference>
<dbReference type="PANTHER" id="PTHR43837">
    <property type="entry name" value="RIBOSOMAL PROTEIN S12 METHYLTHIOTRANSFERASE RIMO"/>
    <property type="match status" value="1"/>
</dbReference>
<dbReference type="PANTHER" id="PTHR43837:SF1">
    <property type="entry name" value="RIBOSOMAL PROTEIN US12 METHYLTHIOTRANSFERASE RIMO"/>
    <property type="match status" value="1"/>
</dbReference>
<dbReference type="Pfam" id="PF04055">
    <property type="entry name" value="Radical_SAM"/>
    <property type="match status" value="1"/>
</dbReference>
<dbReference type="Pfam" id="PF18693">
    <property type="entry name" value="TRAM_2"/>
    <property type="match status" value="1"/>
</dbReference>
<dbReference type="Pfam" id="PF00919">
    <property type="entry name" value="UPF0004"/>
    <property type="match status" value="1"/>
</dbReference>
<dbReference type="SFLD" id="SFLDG01082">
    <property type="entry name" value="B12-binding_domain_containing"/>
    <property type="match status" value="1"/>
</dbReference>
<dbReference type="SFLD" id="SFLDG01061">
    <property type="entry name" value="methylthiotransferase"/>
    <property type="match status" value="1"/>
</dbReference>
<dbReference type="SFLD" id="SFLDF00274">
    <property type="entry name" value="ribosomal_protein_S12_methylth"/>
    <property type="match status" value="1"/>
</dbReference>
<dbReference type="SMART" id="SM00729">
    <property type="entry name" value="Elp3"/>
    <property type="match status" value="1"/>
</dbReference>
<dbReference type="SUPFAM" id="SSF102114">
    <property type="entry name" value="Radical SAM enzymes"/>
    <property type="match status" value="1"/>
</dbReference>
<dbReference type="PROSITE" id="PS51449">
    <property type="entry name" value="MTTASE_N"/>
    <property type="match status" value="1"/>
</dbReference>
<dbReference type="PROSITE" id="PS01278">
    <property type="entry name" value="MTTASE_RADICAL"/>
    <property type="match status" value="1"/>
</dbReference>
<dbReference type="PROSITE" id="PS51918">
    <property type="entry name" value="RADICAL_SAM"/>
    <property type="match status" value="1"/>
</dbReference>
<dbReference type="PROSITE" id="PS50926">
    <property type="entry name" value="TRAM"/>
    <property type="match status" value="1"/>
</dbReference>
<feature type="chain" id="PRO_0000374780" description="Ribosomal protein uS12 methylthiotransferase RimO">
    <location>
        <begin position="1"/>
        <end position="445"/>
    </location>
</feature>
<feature type="domain" description="MTTase N-terminal" evidence="1">
    <location>
        <begin position="4"/>
        <end position="119"/>
    </location>
</feature>
<feature type="domain" description="Radical SAM core" evidence="2">
    <location>
        <begin position="142"/>
        <end position="372"/>
    </location>
</feature>
<feature type="domain" description="TRAM" evidence="1">
    <location>
        <begin position="375"/>
        <end position="441"/>
    </location>
</feature>
<feature type="binding site" evidence="1">
    <location>
        <position position="13"/>
    </location>
    <ligand>
        <name>[4Fe-4S] cluster</name>
        <dbReference type="ChEBI" id="CHEBI:49883"/>
        <label>1</label>
    </ligand>
</feature>
<feature type="binding site" evidence="1">
    <location>
        <position position="48"/>
    </location>
    <ligand>
        <name>[4Fe-4S] cluster</name>
        <dbReference type="ChEBI" id="CHEBI:49883"/>
        <label>1</label>
    </ligand>
</feature>
<feature type="binding site" evidence="1">
    <location>
        <position position="82"/>
    </location>
    <ligand>
        <name>[4Fe-4S] cluster</name>
        <dbReference type="ChEBI" id="CHEBI:49883"/>
        <label>1</label>
    </ligand>
</feature>
<feature type="binding site" evidence="1">
    <location>
        <position position="156"/>
    </location>
    <ligand>
        <name>[4Fe-4S] cluster</name>
        <dbReference type="ChEBI" id="CHEBI:49883"/>
        <label>2</label>
        <note>4Fe-4S-S-AdoMet</note>
    </ligand>
</feature>
<feature type="binding site" evidence="1">
    <location>
        <position position="160"/>
    </location>
    <ligand>
        <name>[4Fe-4S] cluster</name>
        <dbReference type="ChEBI" id="CHEBI:49883"/>
        <label>2</label>
        <note>4Fe-4S-S-AdoMet</note>
    </ligand>
</feature>
<feature type="binding site" evidence="1">
    <location>
        <position position="163"/>
    </location>
    <ligand>
        <name>[4Fe-4S] cluster</name>
        <dbReference type="ChEBI" id="CHEBI:49883"/>
        <label>2</label>
        <note>4Fe-4S-S-AdoMet</note>
    </ligand>
</feature>
<organism>
    <name type="scientific">Clostridium botulinum (strain Langeland / NCTC 10281 / Type F)</name>
    <dbReference type="NCBI Taxonomy" id="441772"/>
    <lineage>
        <taxon>Bacteria</taxon>
        <taxon>Bacillati</taxon>
        <taxon>Bacillota</taxon>
        <taxon>Clostridia</taxon>
        <taxon>Eubacteriales</taxon>
        <taxon>Clostridiaceae</taxon>
        <taxon>Clostridium</taxon>
    </lineage>
</organism>
<proteinExistence type="inferred from homology"/>
<accession>A7GFZ4</accession>
<gene>
    <name evidence="1" type="primary">rimO</name>
    <name type="ordered locus">CLI_2462</name>
</gene>
<reference key="1">
    <citation type="submission" date="2007-06" db="EMBL/GenBank/DDBJ databases">
        <authorList>
            <person name="Brinkac L.M."/>
            <person name="Daugherty S."/>
            <person name="Dodson R.J."/>
            <person name="Madupu R."/>
            <person name="Brown J.L."/>
            <person name="Bruce D."/>
            <person name="Detter C."/>
            <person name="Munk C."/>
            <person name="Smith L.A."/>
            <person name="Smith T.J."/>
            <person name="White O."/>
            <person name="Brettin T.S."/>
        </authorList>
    </citation>
    <scope>NUCLEOTIDE SEQUENCE [LARGE SCALE GENOMIC DNA]</scope>
    <source>
        <strain>Langeland / NCTC 10281 / Type F</strain>
    </source>
</reference>
<comment type="function">
    <text evidence="1">Catalyzes the methylthiolation of an aspartic acid residue of ribosomal protein uS12.</text>
</comment>
<comment type="catalytic activity">
    <reaction evidence="1">
        <text>L-aspartate(89)-[ribosomal protein uS12]-hydrogen + (sulfur carrier)-SH + AH2 + 2 S-adenosyl-L-methionine = 3-methylsulfanyl-L-aspartate(89)-[ribosomal protein uS12]-hydrogen + (sulfur carrier)-H + 5'-deoxyadenosine + L-methionine + A + S-adenosyl-L-homocysteine + 2 H(+)</text>
        <dbReference type="Rhea" id="RHEA:37087"/>
        <dbReference type="Rhea" id="RHEA-COMP:10460"/>
        <dbReference type="Rhea" id="RHEA-COMP:10461"/>
        <dbReference type="Rhea" id="RHEA-COMP:14737"/>
        <dbReference type="Rhea" id="RHEA-COMP:14739"/>
        <dbReference type="ChEBI" id="CHEBI:13193"/>
        <dbReference type="ChEBI" id="CHEBI:15378"/>
        <dbReference type="ChEBI" id="CHEBI:17319"/>
        <dbReference type="ChEBI" id="CHEBI:17499"/>
        <dbReference type="ChEBI" id="CHEBI:29917"/>
        <dbReference type="ChEBI" id="CHEBI:29961"/>
        <dbReference type="ChEBI" id="CHEBI:57844"/>
        <dbReference type="ChEBI" id="CHEBI:57856"/>
        <dbReference type="ChEBI" id="CHEBI:59789"/>
        <dbReference type="ChEBI" id="CHEBI:64428"/>
        <dbReference type="ChEBI" id="CHEBI:73599"/>
        <dbReference type="EC" id="2.8.4.4"/>
    </reaction>
</comment>
<comment type="cofactor">
    <cofactor evidence="1">
        <name>[4Fe-4S] cluster</name>
        <dbReference type="ChEBI" id="CHEBI:49883"/>
    </cofactor>
    <text evidence="1">Binds 2 [4Fe-4S] clusters. One cluster is coordinated with 3 cysteines and an exchangeable S-adenosyl-L-methionine.</text>
</comment>
<comment type="subcellular location">
    <subcellularLocation>
        <location evidence="1">Cytoplasm</location>
    </subcellularLocation>
</comment>
<comment type="similarity">
    <text evidence="1">Belongs to the methylthiotransferase family. RimO subfamily.</text>
</comment>